<protein>
    <recommendedName>
        <fullName evidence="8">Transcriptional activator protein Anr</fullName>
        <shortName evidence="8">ANR</shortName>
    </recommendedName>
    <alternativeName>
        <fullName evidence="11">Anaerobic regulatory protein</fullName>
    </alternativeName>
</protein>
<accession>O85222</accession>
<name>ANR_PSEPH</name>
<keyword id="KW-0010">Activator</keyword>
<keyword id="KW-0238">DNA-binding</keyword>
<keyword id="KW-0408">Iron</keyword>
<keyword id="KW-0804">Transcription</keyword>
<keyword id="KW-0805">Transcription regulation</keyword>
<dbReference type="EMBL" id="AF053611">
    <property type="protein sequence ID" value="AAC38593.1"/>
    <property type="molecule type" value="Genomic_DNA"/>
</dbReference>
<dbReference type="SMR" id="O85222"/>
<dbReference type="PATRIC" id="fig|1124983.3.peg.1972"/>
<dbReference type="eggNOG" id="COG0664">
    <property type="taxonomic scope" value="Bacteria"/>
</dbReference>
<dbReference type="GO" id="GO:0005829">
    <property type="term" value="C:cytosol"/>
    <property type="evidence" value="ECO:0007669"/>
    <property type="project" value="TreeGrafter"/>
</dbReference>
<dbReference type="GO" id="GO:0003677">
    <property type="term" value="F:DNA binding"/>
    <property type="evidence" value="ECO:0007669"/>
    <property type="project" value="UniProtKB-KW"/>
</dbReference>
<dbReference type="GO" id="GO:0003700">
    <property type="term" value="F:DNA-binding transcription factor activity"/>
    <property type="evidence" value="ECO:0007669"/>
    <property type="project" value="InterPro"/>
</dbReference>
<dbReference type="CDD" id="cd00038">
    <property type="entry name" value="CAP_ED"/>
    <property type="match status" value="1"/>
</dbReference>
<dbReference type="CDD" id="cd00092">
    <property type="entry name" value="HTH_CRP"/>
    <property type="match status" value="1"/>
</dbReference>
<dbReference type="FunFam" id="1.10.10.10:FF:000028">
    <property type="entry name" value="Fumarate/nitrate reduction transcriptional regulator Fnr"/>
    <property type="match status" value="1"/>
</dbReference>
<dbReference type="FunFam" id="2.60.120.10:FF:000004">
    <property type="entry name" value="Fumarate/nitrate reduction transcriptional regulator Fnr"/>
    <property type="match status" value="1"/>
</dbReference>
<dbReference type="Gene3D" id="2.60.120.10">
    <property type="entry name" value="Jelly Rolls"/>
    <property type="match status" value="1"/>
</dbReference>
<dbReference type="Gene3D" id="1.10.10.10">
    <property type="entry name" value="Winged helix-like DNA-binding domain superfamily/Winged helix DNA-binding domain"/>
    <property type="match status" value="1"/>
</dbReference>
<dbReference type="InterPro" id="IPR000595">
    <property type="entry name" value="cNMP-bd_dom"/>
</dbReference>
<dbReference type="InterPro" id="IPR018490">
    <property type="entry name" value="cNMP-bd_dom_sf"/>
</dbReference>
<dbReference type="InterPro" id="IPR050397">
    <property type="entry name" value="Env_Response_Regulators"/>
</dbReference>
<dbReference type="InterPro" id="IPR012318">
    <property type="entry name" value="HTH_CRP"/>
</dbReference>
<dbReference type="InterPro" id="IPR014710">
    <property type="entry name" value="RmlC-like_jellyroll"/>
</dbReference>
<dbReference type="InterPro" id="IPR018335">
    <property type="entry name" value="Tscrpt_reg_HTH_Crp-type_CS"/>
</dbReference>
<dbReference type="InterPro" id="IPR036388">
    <property type="entry name" value="WH-like_DNA-bd_sf"/>
</dbReference>
<dbReference type="InterPro" id="IPR036390">
    <property type="entry name" value="WH_DNA-bd_sf"/>
</dbReference>
<dbReference type="NCBIfam" id="NF008365">
    <property type="entry name" value="PRK11161.1"/>
    <property type="match status" value="1"/>
</dbReference>
<dbReference type="PANTHER" id="PTHR24567">
    <property type="entry name" value="CRP FAMILY TRANSCRIPTIONAL REGULATORY PROTEIN"/>
    <property type="match status" value="1"/>
</dbReference>
<dbReference type="PANTHER" id="PTHR24567:SF75">
    <property type="entry name" value="FUMARATE AND NITRATE REDUCTION REGULATORY PROTEIN"/>
    <property type="match status" value="1"/>
</dbReference>
<dbReference type="Pfam" id="PF00027">
    <property type="entry name" value="cNMP_binding"/>
    <property type="match status" value="1"/>
</dbReference>
<dbReference type="Pfam" id="PF13545">
    <property type="entry name" value="HTH_Crp_2"/>
    <property type="match status" value="1"/>
</dbReference>
<dbReference type="PRINTS" id="PR00034">
    <property type="entry name" value="HTHCRP"/>
</dbReference>
<dbReference type="SMART" id="SM00100">
    <property type="entry name" value="cNMP"/>
    <property type="match status" value="1"/>
</dbReference>
<dbReference type="SMART" id="SM00419">
    <property type="entry name" value="HTH_CRP"/>
    <property type="match status" value="1"/>
</dbReference>
<dbReference type="SUPFAM" id="SSF51206">
    <property type="entry name" value="cAMP-binding domain-like"/>
    <property type="match status" value="1"/>
</dbReference>
<dbReference type="SUPFAM" id="SSF46785">
    <property type="entry name" value="Winged helix' DNA-binding domain"/>
    <property type="match status" value="1"/>
</dbReference>
<dbReference type="PROSITE" id="PS50042">
    <property type="entry name" value="CNMP_BINDING_3"/>
    <property type="match status" value="1"/>
</dbReference>
<dbReference type="PROSITE" id="PS00042">
    <property type="entry name" value="HTH_CRP_1"/>
    <property type="match status" value="1"/>
</dbReference>
<dbReference type="PROSITE" id="PS51063">
    <property type="entry name" value="HTH_CRP_2"/>
    <property type="match status" value="1"/>
</dbReference>
<feature type="chain" id="PRO_0000419765" description="Transcriptional activator protein Anr">
    <location>
        <begin position="1"/>
        <end position="244"/>
    </location>
</feature>
<feature type="domain" description="HTH crp-type" evidence="4">
    <location>
        <begin position="159"/>
        <end position="232"/>
    </location>
</feature>
<feature type="DNA-binding region" description="H-T-H motif" evidence="1 4">
    <location>
        <begin position="192"/>
        <end position="211"/>
    </location>
</feature>
<feature type="binding site" evidence="2 3">
    <location>
        <begin position="21"/>
        <end position="149"/>
    </location>
    <ligand>
        <name>a nucleoside 3',5'-cyclic phosphate</name>
        <dbReference type="ChEBI" id="CHEBI:58464"/>
    </ligand>
</feature>
<organism>
    <name type="scientific">Pseudomonas protegens (strain DSM 19095 / LMG 27888 / CFBP 6595 / CHA0)</name>
    <dbReference type="NCBI Taxonomy" id="1124983"/>
    <lineage>
        <taxon>Bacteria</taxon>
        <taxon>Pseudomonadati</taxon>
        <taxon>Pseudomonadota</taxon>
        <taxon>Gammaproteobacteria</taxon>
        <taxon>Pseudomonadales</taxon>
        <taxon>Pseudomonadaceae</taxon>
        <taxon>Pseudomonas</taxon>
    </lineage>
</organism>
<gene>
    <name evidence="11" type="primary">anr</name>
</gene>
<reference evidence="9 11" key="1">
    <citation type="journal article" date="1998" name="J. Bacteriol.">
        <title>Characterization of the hcnABC gene cluster encoding hydrogen cyanide synthase and anaerobic regulation by ANR in the strictly aerobic biocontrol agent Pseudomonas fluorescens CHA0.</title>
        <authorList>
            <person name="Laville J."/>
            <person name="Blumer C."/>
            <person name="Von Schroetter C."/>
            <person name="Gaia V."/>
            <person name="Defago G."/>
            <person name="Keel C."/>
            <person name="Haas D."/>
        </authorList>
    </citation>
    <scope>NUCLEOTIDE SEQUENCE [GENOMIC DNA]</scope>
    <scope>FUNCTION</scope>
    <scope>INDUCTION</scope>
    <source>
        <strain>DSM 19095 / LMG 27888 / CFBP 6595 / CHA0</strain>
    </source>
</reference>
<reference key="2">
    <citation type="journal article" date="1999" name="Proc. Natl. Acad. Sci. U.S.A.">
        <title>Global GacA-steered control of cyanide and exoprotease production in Pseudomonas fluorescens involves specific ribosome binding sites.</title>
        <authorList>
            <person name="Blumer C."/>
            <person name="Heeb S."/>
            <person name="Pessi G."/>
            <person name="Haas D."/>
        </authorList>
    </citation>
    <scope>FUNCTION</scope>
    <scope>DISRUPTION PHENOTYPE</scope>
    <source>
        <strain>DSM 19095 / LMG 27888 / CFBP 6595 / CHA0</strain>
    </source>
</reference>
<reference key="3">
    <citation type="journal article" date="2000" name="Microbiology">
        <title>Iron regulation of the hcnABC genes encoding hydrogen cyanide synthase depends on the anaerobic regulator ANR rather than on the global activator GacA in Pseudomonas fluorescens CHA0.</title>
        <authorList>
            <person name="Blumer C."/>
            <person name="Haas D."/>
        </authorList>
    </citation>
    <scope>FUNCTION</scope>
    <scope>INDUCTION</scope>
    <source>
        <strain>DSM 19095 / LMG 27888 / CFBP 6595 / CHA0</strain>
    </source>
</reference>
<proteinExistence type="evidence at transcript level"/>
<sequence length="244" mass="27155">MSEPVKLRAHNQAHCKDCSLAPLCLPLSLNLEDMDALDEIVKRGRPLKKGEFLFRQGDGFDSVYAVRSGALKTFSLSDSGEEQITGFHLPSELVGLSGMDTESHPVSAQALETTSVCEIPFERLDELALQLPQLRRQLMRVMSREIRDDQQMMLLLSKKTADERIATFLVNLSARFRARGFSANQFRLSMSRNEIGNYLGLAVETVSRVFTRFQQNELIAAEGKEVHILDPIQLCALAGGSVEG</sequence>
<evidence type="ECO:0000250" key="1">
    <source>
        <dbReference type="UniProtKB" id="P0ACJ8"/>
    </source>
</evidence>
<evidence type="ECO:0000250" key="2">
    <source>
        <dbReference type="UniProtKB" id="P23926"/>
    </source>
</evidence>
<evidence type="ECO:0000255" key="3">
    <source>
        <dbReference type="PROSITE-ProRule" id="PRU00060"/>
    </source>
</evidence>
<evidence type="ECO:0000255" key="4">
    <source>
        <dbReference type="PROSITE-ProRule" id="PRU00387"/>
    </source>
</evidence>
<evidence type="ECO:0000269" key="5">
    <source>
    </source>
</evidence>
<evidence type="ECO:0000269" key="6">
    <source>
    </source>
</evidence>
<evidence type="ECO:0000269" key="7">
    <source>
    </source>
</evidence>
<evidence type="ECO:0000303" key="8">
    <source>
    </source>
</evidence>
<evidence type="ECO:0000305" key="9"/>
<evidence type="ECO:0000305" key="10">
    <source>
    </source>
</evidence>
<evidence type="ECO:0000312" key="11">
    <source>
        <dbReference type="EMBL" id="AAC38593.1"/>
    </source>
</evidence>
<comment type="function">
    <text evidence="6 7 10">Transcriptional activator of anaerobic gene expression. Regulates the expression of the components of the hydrogen cyanide synthase (HcnABC) in a positive manner (PubMed:10570200). May also act as an iron sensor.</text>
</comment>
<comment type="induction">
    <text evidence="6 7">Up-regulated by Fe(3+) levels in oxygen-limiting conditions.</text>
</comment>
<comment type="disruption phenotype">
    <text evidence="5">Nearly complete loss of expression of hcnA (PubMed:10570200).</text>
</comment>
<comment type="miscellaneous">
    <text evidence="2">Possesses 4 cysteines which may bind a metal ion (possibly iron).</text>
</comment>